<reference key="1">
    <citation type="journal article" date="2001" name="J. Biol. Chem.">
        <title>Halotolerant cyanobacterium Aphanothece halophytica contains an Na(+)/H(+) antiporter, homologous to eukaryotic ones, with novel ion specificity affected by C-terminal tail.</title>
        <authorList>
            <person name="Waditee R."/>
            <person name="Hibino T."/>
            <person name="Tanaka Y."/>
            <person name="Nakamura T."/>
            <person name="Incharoensakdi A."/>
            <person name="Takabe T."/>
        </authorList>
    </citation>
    <scope>NUCLEOTIDE SEQUENCE [GENOMIC DNA]</scope>
    <scope>FUNCTION</scope>
    <scope>BIOPHYSICOCHEMICAL PROPERTIES</scope>
    <scope>SUBCELLULAR LOCATION</scope>
    <scope>DOMAIN</scope>
</reference>
<proteinExistence type="evidence at protein level"/>
<feature type="chain" id="PRO_0000423861" description="Na(+)/H(+) antiporter ApNhaP">
    <location>
        <begin position="1"/>
        <end position="521"/>
    </location>
</feature>
<feature type="topological domain" description="Periplasmic" evidence="1">
    <location>
        <begin position="1"/>
        <end position="18"/>
    </location>
</feature>
<feature type="transmembrane region" description="Helical" evidence="1">
    <location>
        <begin position="19"/>
        <end position="39"/>
    </location>
</feature>
<feature type="topological domain" description="Cytoplasmic" evidence="1">
    <location>
        <begin position="40"/>
        <end position="41"/>
    </location>
</feature>
<feature type="transmembrane region" description="Helical" evidence="1">
    <location>
        <begin position="42"/>
        <end position="62"/>
    </location>
</feature>
<feature type="topological domain" description="Periplasmic" evidence="1">
    <location>
        <begin position="63"/>
        <end position="94"/>
    </location>
</feature>
<feature type="transmembrane region" description="Helical" evidence="1">
    <location>
        <begin position="95"/>
        <end position="115"/>
    </location>
</feature>
<feature type="topological domain" description="Cytoplasmic" evidence="1">
    <location>
        <begin position="116"/>
        <end position="126"/>
    </location>
</feature>
<feature type="transmembrane region" description="Helical" evidence="1">
    <location>
        <begin position="127"/>
        <end position="147"/>
    </location>
</feature>
<feature type="topological domain" description="Periplasmic" evidence="1">
    <location>
        <begin position="148"/>
        <end position="164"/>
    </location>
</feature>
<feature type="transmembrane region" description="Helical" evidence="1">
    <location>
        <begin position="165"/>
        <end position="185"/>
    </location>
</feature>
<feature type="topological domain" description="Cytoplasmic" evidence="1">
    <location>
        <begin position="186"/>
        <end position="194"/>
    </location>
</feature>
<feature type="transmembrane region" description="Helical" evidence="1">
    <location>
        <begin position="195"/>
        <end position="215"/>
    </location>
</feature>
<feature type="topological domain" description="Periplasmic" evidence="1">
    <location>
        <begin position="216"/>
        <end position="245"/>
    </location>
</feature>
<feature type="transmembrane region" description="Helical" evidence="1">
    <location>
        <begin position="246"/>
        <end position="266"/>
    </location>
</feature>
<feature type="topological domain" description="Cytoplasmic" evidence="1">
    <location>
        <begin position="267"/>
        <end position="276"/>
    </location>
</feature>
<feature type="transmembrane region" description="Helical" evidence="1">
    <location>
        <begin position="277"/>
        <end position="297"/>
    </location>
</feature>
<feature type="topological domain" description="Periplasmic" evidence="1">
    <location>
        <begin position="298"/>
        <end position="311"/>
    </location>
</feature>
<feature type="transmembrane region" description="Helical" evidence="1">
    <location>
        <begin position="312"/>
        <end position="332"/>
    </location>
</feature>
<feature type="topological domain" description="Cytoplasmic" evidence="1">
    <location>
        <begin position="333"/>
        <end position="349"/>
    </location>
</feature>
<feature type="transmembrane region" description="Helical" evidence="1">
    <location>
        <begin position="350"/>
        <end position="370"/>
    </location>
</feature>
<feature type="topological domain" description="Periplasmic" evidence="1">
    <location>
        <begin position="371"/>
        <end position="380"/>
    </location>
</feature>
<feature type="transmembrane region" description="Helical" evidence="1">
    <location>
        <begin position="381"/>
        <end position="401"/>
    </location>
</feature>
<feature type="topological domain" description="Cytoplasmic" evidence="1">
    <location>
        <begin position="402"/>
        <end position="521"/>
    </location>
</feature>
<accession>Q93HU4</accession>
<organism>
    <name type="scientific">Aphanothece halophytica</name>
    <dbReference type="NCBI Taxonomy" id="72020"/>
    <lineage>
        <taxon>Bacteria</taxon>
        <taxon>Bacillati</taxon>
        <taxon>Cyanobacteriota</taxon>
        <taxon>Cyanophyceae</taxon>
        <taxon>Oscillatoriophycideae</taxon>
        <taxon>Chroococcales</taxon>
        <taxon>Aphanothecaceae</taxon>
        <taxon>Aphanothece</taxon>
    </lineage>
</organism>
<gene>
    <name type="primary">apnhaP</name>
</gene>
<keyword id="KW-0050">Antiport</keyword>
<keyword id="KW-0997">Cell inner membrane</keyword>
<keyword id="KW-1003">Cell membrane</keyword>
<keyword id="KW-0406">Ion transport</keyword>
<keyword id="KW-0472">Membrane</keyword>
<keyword id="KW-0915">Sodium</keyword>
<keyword id="KW-0739">Sodium transport</keyword>
<keyword id="KW-0812">Transmembrane</keyword>
<keyword id="KW-1133">Transmembrane helix</keyword>
<keyword id="KW-0813">Transport</keyword>
<protein>
    <recommendedName>
        <fullName>Na(+)/H(+) antiporter ApNhaP</fullName>
    </recommendedName>
    <alternativeName>
        <fullName>Sodium/proton antiporter ApNhaP</fullName>
    </alternativeName>
</protein>
<evidence type="ECO:0000255" key="1"/>
<evidence type="ECO:0000269" key="2">
    <source>
    </source>
</evidence>
<evidence type="ECO:0000305" key="3"/>
<dbReference type="EMBL" id="AB059562">
    <property type="protein sequence ID" value="BAB69459.1"/>
    <property type="molecule type" value="Genomic_DNA"/>
</dbReference>
<dbReference type="SMR" id="Q93HU4"/>
<dbReference type="TCDB" id="2.A.36.7.1">
    <property type="family name" value="the monovalent cation:proton antiporter-1 (cpa1) family"/>
</dbReference>
<dbReference type="GO" id="GO:0005886">
    <property type="term" value="C:plasma membrane"/>
    <property type="evidence" value="ECO:0007669"/>
    <property type="project" value="UniProtKB-SubCell"/>
</dbReference>
<dbReference type="GO" id="GO:0015386">
    <property type="term" value="F:potassium:proton antiporter activity"/>
    <property type="evidence" value="ECO:0007669"/>
    <property type="project" value="TreeGrafter"/>
</dbReference>
<dbReference type="GO" id="GO:0015385">
    <property type="term" value="F:sodium:proton antiporter activity"/>
    <property type="evidence" value="ECO:0007669"/>
    <property type="project" value="InterPro"/>
</dbReference>
<dbReference type="GO" id="GO:0051453">
    <property type="term" value="P:regulation of intracellular pH"/>
    <property type="evidence" value="ECO:0007669"/>
    <property type="project" value="TreeGrafter"/>
</dbReference>
<dbReference type="GO" id="GO:0098719">
    <property type="term" value="P:sodium ion import across plasma membrane"/>
    <property type="evidence" value="ECO:0007669"/>
    <property type="project" value="TreeGrafter"/>
</dbReference>
<dbReference type="Gene3D" id="6.10.140.1330">
    <property type="match status" value="1"/>
</dbReference>
<dbReference type="InterPro" id="IPR018422">
    <property type="entry name" value="Cation/H_exchanger_CPA1"/>
</dbReference>
<dbReference type="InterPro" id="IPR004705">
    <property type="entry name" value="Cation/H_exchanger_CPA1_bac"/>
</dbReference>
<dbReference type="InterPro" id="IPR006153">
    <property type="entry name" value="Cation/H_exchanger_TM"/>
</dbReference>
<dbReference type="NCBIfam" id="TIGR00831">
    <property type="entry name" value="a_cpa1"/>
    <property type="match status" value="1"/>
</dbReference>
<dbReference type="PANTHER" id="PTHR10110:SF195">
    <property type="entry name" value="NA(+)_H(+) ANTIPORTER NHAS2"/>
    <property type="match status" value="1"/>
</dbReference>
<dbReference type="PANTHER" id="PTHR10110">
    <property type="entry name" value="SODIUM/HYDROGEN EXCHANGER"/>
    <property type="match status" value="1"/>
</dbReference>
<dbReference type="Pfam" id="PF00999">
    <property type="entry name" value="Na_H_Exchanger"/>
    <property type="match status" value="1"/>
</dbReference>
<name>NHAP_APHHA</name>
<comment type="function">
    <text evidence="2">Na(+)/H(+) antiporter that extrudes sodium in exchange for external protons. Also shows high Ca(2+)/H(+) antiporter activity at alkaline pH. Does not catalyze exchange between Li(+) and H(+).</text>
</comment>
<comment type="biophysicochemical properties">
    <phDependence>
        <text evidence="2">Active over a wide pH range between 5 and 9.</text>
    </phDependence>
</comment>
<comment type="subcellular location">
    <subcellularLocation>
        <location evidence="2">Cell inner membrane</location>
        <topology evidence="2">Multi-pass membrane protein</topology>
    </subcellularLocation>
</comment>
<comment type="domain">
    <text evidence="2">The C-terminal tail could affect ion specificity.</text>
</comment>
<comment type="similarity">
    <text evidence="3">Belongs to the monovalent cation:proton antiporter 1 (CPA1) transporter (TC 2.A.36) family.</text>
</comment>
<sequence>MTIEAAMGEEAIKENLEQFLIVLSVSLGVATLSQISSFFRQIPYTLLLVIVGLGLAFVDIRLVNLSPELILEIFLPPLLFEAAWNIRWRNLKKNLFPVVLLAIIGVVISVVGIGFSLNYFSGLSLPIALLVGAILAATDPVSVIALFRELGVGERLTVLMEGESLFNDGVAVVAFSLLVGIPLGTQEFSVTNTLIQFVTLQGIGIGCGGVIGFGISYLTQRFDLPLVEQSLTLVSAYGTYLITEELGGSGVIGVVTVGLILGNFGSRIGMNPRTRLLVSEFWEFIAFFVNSIVFLLIGDQINIRGLADNGQLILITIIALVIIRAISIYGLGTISNLITKQDISWQEETVLWWGGLRGSVSIALALSVPVMLDGRQDIIEAVFGVVLFTLLVQGLTMQTVIEKLGLIGDRAQRRTYSELIARRSALERVLAHLNAVPPSPSIRMKSLKTTKEASKGQLESRQTKKLRSYNNSYPQLRSLEQEQLRELTFKVEADTYAELIRAGKLNNNLSPLLQEVLAKPE</sequence>